<feature type="chain" id="PRO_1000063452" description="Histidine biosynthesis bifunctional protein HisB">
    <location>
        <begin position="1"/>
        <end position="375"/>
    </location>
</feature>
<feature type="region of interest" description="Histidinol-phosphatase" evidence="1">
    <location>
        <begin position="1"/>
        <end position="168"/>
    </location>
</feature>
<feature type="region of interest" description="Imidazoleglycerol-phosphate dehydratase" evidence="1">
    <location>
        <begin position="169"/>
        <end position="375"/>
    </location>
</feature>
<feature type="active site" description="Nucleophile" evidence="1">
    <location>
        <position position="8"/>
    </location>
</feature>
<feature type="active site" description="Proton donor" evidence="1">
    <location>
        <position position="10"/>
    </location>
</feature>
<feature type="binding site" evidence="1">
    <location>
        <position position="8"/>
    </location>
    <ligand>
        <name>Mg(2+)</name>
        <dbReference type="ChEBI" id="CHEBI:18420"/>
    </ligand>
</feature>
<feature type="binding site" evidence="1">
    <location>
        <position position="10"/>
    </location>
    <ligand>
        <name>Mg(2+)</name>
        <dbReference type="ChEBI" id="CHEBI:18420"/>
    </ligand>
</feature>
<feature type="binding site" evidence="1">
    <location>
        <position position="128"/>
    </location>
    <ligand>
        <name>Mg(2+)</name>
        <dbReference type="ChEBI" id="CHEBI:18420"/>
    </ligand>
</feature>
<sequence length="375" mass="41887">MTPILFVDRDGTLITEPADYQIDAYEKLRFVDHVIPAMLKLRDAGYQFVIVSNQDGLGSESFPRASFDGPNNLMLQIFASQGIEFREVLIDCSWPSDNAPTRKPGVGLMVPYLQDRTIDWARSAMVGDRITDIQFAQNLNIRGFQLRTDEFGGEWDWPGIAHELADAPRRAVVQRNTKETRIRVELDLDRVAEPKTATGLPFFDHMLEQIGKHGGFALDIRAEGDLHIDEHHTIEDTGLALGQALREALGDKRGIGRYGFDPESSPWQVAGDTAQHGFTLPMDETIASAALDFSGRPYFVFDGQFKRDRLGDMPTELVPHFFRSICDASGVNLHLTVRGENDHHKVEACFKALARALRQAIRREGSALPTTKGAL</sequence>
<accession>Q2P3K1</accession>
<protein>
    <recommendedName>
        <fullName evidence="1">Histidine biosynthesis bifunctional protein HisB</fullName>
    </recommendedName>
    <domain>
        <recommendedName>
            <fullName evidence="1">Histidinol-phosphatase</fullName>
            <ecNumber evidence="1">3.1.3.15</ecNumber>
        </recommendedName>
    </domain>
    <domain>
        <recommendedName>
            <fullName evidence="1">Imidazoleglycerol-phosphate dehydratase</fullName>
            <shortName evidence="1">IGPD</shortName>
            <ecNumber evidence="1">4.2.1.19</ecNumber>
        </recommendedName>
    </domain>
</protein>
<comment type="catalytic activity">
    <reaction evidence="1">
        <text>D-erythro-1-(imidazol-4-yl)glycerol 3-phosphate = 3-(imidazol-4-yl)-2-oxopropyl phosphate + H2O</text>
        <dbReference type="Rhea" id="RHEA:11040"/>
        <dbReference type="ChEBI" id="CHEBI:15377"/>
        <dbReference type="ChEBI" id="CHEBI:57766"/>
        <dbReference type="ChEBI" id="CHEBI:58278"/>
        <dbReference type="EC" id="4.2.1.19"/>
    </reaction>
</comment>
<comment type="catalytic activity">
    <reaction evidence="1">
        <text>L-histidinol phosphate + H2O = L-histidinol + phosphate</text>
        <dbReference type="Rhea" id="RHEA:14465"/>
        <dbReference type="ChEBI" id="CHEBI:15377"/>
        <dbReference type="ChEBI" id="CHEBI:43474"/>
        <dbReference type="ChEBI" id="CHEBI:57699"/>
        <dbReference type="ChEBI" id="CHEBI:57980"/>
        <dbReference type="EC" id="3.1.3.15"/>
    </reaction>
</comment>
<comment type="cofactor">
    <cofactor evidence="1">
        <name>Mg(2+)</name>
        <dbReference type="ChEBI" id="CHEBI:18420"/>
    </cofactor>
</comment>
<comment type="pathway">
    <text evidence="1">Amino-acid biosynthesis; L-histidine biosynthesis; L-histidine from 5-phospho-alpha-D-ribose 1-diphosphate: step 6/9.</text>
</comment>
<comment type="pathway">
    <text evidence="1">Amino-acid biosynthesis; L-histidine biosynthesis; L-histidine from 5-phospho-alpha-D-ribose 1-diphosphate: step 8/9.</text>
</comment>
<comment type="subcellular location">
    <subcellularLocation>
        <location evidence="1">Cytoplasm</location>
    </subcellularLocation>
</comment>
<comment type="similarity">
    <text evidence="1">In the N-terminal section; belongs to the histidinol-phosphatase family.</text>
</comment>
<comment type="similarity">
    <text evidence="1">In the C-terminal section; belongs to the imidazoleglycerol-phosphate dehydratase family.</text>
</comment>
<gene>
    <name evidence="1" type="primary">hisB</name>
    <name type="ordered locus">XOO2121</name>
</gene>
<name>HIS7_XANOM</name>
<evidence type="ECO:0000255" key="1">
    <source>
        <dbReference type="HAMAP-Rule" id="MF_01022"/>
    </source>
</evidence>
<reference key="1">
    <citation type="journal article" date="2005" name="Jpn. Agric. Res. Q.">
        <title>Genome sequence of Xanthomonas oryzae pv. oryzae suggests contribution of large numbers of effector genes and insertion sequences to its race diversity.</title>
        <authorList>
            <person name="Ochiai H."/>
            <person name="Inoue Y."/>
            <person name="Takeya M."/>
            <person name="Sasaki A."/>
            <person name="Kaku H."/>
        </authorList>
    </citation>
    <scope>NUCLEOTIDE SEQUENCE [LARGE SCALE GENOMIC DNA]</scope>
    <source>
        <strain>MAFF 311018</strain>
    </source>
</reference>
<proteinExistence type="inferred from homology"/>
<organism>
    <name type="scientific">Xanthomonas oryzae pv. oryzae (strain MAFF 311018)</name>
    <dbReference type="NCBI Taxonomy" id="342109"/>
    <lineage>
        <taxon>Bacteria</taxon>
        <taxon>Pseudomonadati</taxon>
        <taxon>Pseudomonadota</taxon>
        <taxon>Gammaproteobacteria</taxon>
        <taxon>Lysobacterales</taxon>
        <taxon>Lysobacteraceae</taxon>
        <taxon>Xanthomonas</taxon>
    </lineage>
</organism>
<keyword id="KW-0028">Amino-acid biosynthesis</keyword>
<keyword id="KW-0963">Cytoplasm</keyword>
<keyword id="KW-0368">Histidine biosynthesis</keyword>
<keyword id="KW-0378">Hydrolase</keyword>
<keyword id="KW-0456">Lyase</keyword>
<keyword id="KW-0460">Magnesium</keyword>
<keyword id="KW-0479">Metal-binding</keyword>
<keyword id="KW-0511">Multifunctional enzyme</keyword>
<dbReference type="EC" id="3.1.3.15" evidence="1"/>
<dbReference type="EC" id="4.2.1.19" evidence="1"/>
<dbReference type="EMBL" id="AP008229">
    <property type="protein sequence ID" value="BAE68876.1"/>
    <property type="molecule type" value="Genomic_DNA"/>
</dbReference>
<dbReference type="RefSeq" id="WP_011258944.1">
    <property type="nucleotide sequence ID" value="NC_007705.1"/>
</dbReference>
<dbReference type="SMR" id="Q2P3K1"/>
<dbReference type="KEGG" id="xom:XOO2121"/>
<dbReference type="HOGENOM" id="CLU_044308_0_0_6"/>
<dbReference type="UniPathway" id="UPA00031">
    <property type="reaction ID" value="UER00011"/>
</dbReference>
<dbReference type="UniPathway" id="UPA00031">
    <property type="reaction ID" value="UER00013"/>
</dbReference>
<dbReference type="GO" id="GO:0005737">
    <property type="term" value="C:cytoplasm"/>
    <property type="evidence" value="ECO:0007669"/>
    <property type="project" value="UniProtKB-SubCell"/>
</dbReference>
<dbReference type="GO" id="GO:0004401">
    <property type="term" value="F:histidinol-phosphatase activity"/>
    <property type="evidence" value="ECO:0007669"/>
    <property type="project" value="UniProtKB-UniRule"/>
</dbReference>
<dbReference type="GO" id="GO:0004424">
    <property type="term" value="F:imidazoleglycerol-phosphate dehydratase activity"/>
    <property type="evidence" value="ECO:0007669"/>
    <property type="project" value="UniProtKB-UniRule"/>
</dbReference>
<dbReference type="GO" id="GO:0046872">
    <property type="term" value="F:metal ion binding"/>
    <property type="evidence" value="ECO:0007669"/>
    <property type="project" value="UniProtKB-KW"/>
</dbReference>
<dbReference type="GO" id="GO:0000105">
    <property type="term" value="P:L-histidine biosynthetic process"/>
    <property type="evidence" value="ECO:0007669"/>
    <property type="project" value="UniProtKB-UniRule"/>
</dbReference>
<dbReference type="CDD" id="cd07914">
    <property type="entry name" value="IGPD"/>
    <property type="match status" value="1"/>
</dbReference>
<dbReference type="FunFam" id="3.40.50.1000:FF:000061">
    <property type="entry name" value="Histidine biosynthesis bifunctional protein HisB"/>
    <property type="match status" value="1"/>
</dbReference>
<dbReference type="FunFam" id="3.30.230.40:FF:000001">
    <property type="entry name" value="Imidazoleglycerol-phosphate dehydratase HisB"/>
    <property type="match status" value="1"/>
</dbReference>
<dbReference type="FunFam" id="3.30.230.40:FF:000003">
    <property type="entry name" value="Imidazoleglycerol-phosphate dehydratase HisB"/>
    <property type="match status" value="1"/>
</dbReference>
<dbReference type="Gene3D" id="3.40.50.1000">
    <property type="entry name" value="HAD superfamily/HAD-like"/>
    <property type="match status" value="1"/>
</dbReference>
<dbReference type="Gene3D" id="3.30.230.40">
    <property type="entry name" value="Imidazole glycerol phosphate dehydratase, domain 1"/>
    <property type="match status" value="2"/>
</dbReference>
<dbReference type="HAMAP" id="MF_01022">
    <property type="entry name" value="Bifunc_HisB"/>
    <property type="match status" value="1"/>
</dbReference>
<dbReference type="HAMAP" id="MF_00076">
    <property type="entry name" value="HisB"/>
    <property type="match status" value="1"/>
</dbReference>
<dbReference type="InterPro" id="IPR036412">
    <property type="entry name" value="HAD-like_sf"/>
</dbReference>
<dbReference type="InterPro" id="IPR006549">
    <property type="entry name" value="HAD-SF_hydro_IIIA"/>
</dbReference>
<dbReference type="InterPro" id="IPR023214">
    <property type="entry name" value="HAD_sf"/>
</dbReference>
<dbReference type="InterPro" id="IPR020566">
    <property type="entry name" value="His_synth_bifunc_HisB"/>
</dbReference>
<dbReference type="InterPro" id="IPR005954">
    <property type="entry name" value="HisB_N"/>
</dbReference>
<dbReference type="InterPro" id="IPR006543">
    <property type="entry name" value="Histidinol-phos"/>
</dbReference>
<dbReference type="InterPro" id="IPR038494">
    <property type="entry name" value="IGPD_sf"/>
</dbReference>
<dbReference type="InterPro" id="IPR000807">
    <property type="entry name" value="ImidazoleglycerolP_deHydtase"/>
</dbReference>
<dbReference type="InterPro" id="IPR020565">
    <property type="entry name" value="ImidazoleglycerP_deHydtase_CS"/>
</dbReference>
<dbReference type="InterPro" id="IPR020568">
    <property type="entry name" value="Ribosomal_Su5_D2-typ_SF"/>
</dbReference>
<dbReference type="NCBIfam" id="TIGR01662">
    <property type="entry name" value="HAD-SF-IIIA"/>
    <property type="match status" value="1"/>
</dbReference>
<dbReference type="NCBIfam" id="TIGR01261">
    <property type="entry name" value="hisB_Nterm"/>
    <property type="match status" value="1"/>
</dbReference>
<dbReference type="NCBIfam" id="TIGR01656">
    <property type="entry name" value="Histidinol-ppas"/>
    <property type="match status" value="1"/>
</dbReference>
<dbReference type="NCBIfam" id="NF003937">
    <property type="entry name" value="PRK05446.1"/>
    <property type="match status" value="1"/>
</dbReference>
<dbReference type="PANTHER" id="PTHR23133:SF2">
    <property type="entry name" value="IMIDAZOLEGLYCEROL-PHOSPHATE DEHYDRATASE"/>
    <property type="match status" value="1"/>
</dbReference>
<dbReference type="PANTHER" id="PTHR23133">
    <property type="entry name" value="IMIDAZOLEGLYCEROL-PHOSPHATE DEHYDRATASE HIS7"/>
    <property type="match status" value="1"/>
</dbReference>
<dbReference type="Pfam" id="PF13242">
    <property type="entry name" value="Hydrolase_like"/>
    <property type="match status" value="1"/>
</dbReference>
<dbReference type="Pfam" id="PF00475">
    <property type="entry name" value="IGPD"/>
    <property type="match status" value="1"/>
</dbReference>
<dbReference type="SUPFAM" id="SSF56784">
    <property type="entry name" value="HAD-like"/>
    <property type="match status" value="1"/>
</dbReference>
<dbReference type="SUPFAM" id="SSF54211">
    <property type="entry name" value="Ribosomal protein S5 domain 2-like"/>
    <property type="match status" value="2"/>
</dbReference>
<dbReference type="PROSITE" id="PS00954">
    <property type="entry name" value="IGP_DEHYDRATASE_1"/>
    <property type="match status" value="1"/>
</dbReference>
<dbReference type="PROSITE" id="PS00955">
    <property type="entry name" value="IGP_DEHYDRATASE_2"/>
    <property type="match status" value="1"/>
</dbReference>